<name>RP132_FOWPN</name>
<reference key="1">
    <citation type="journal article" date="2000" name="J. Virol.">
        <title>The genome of fowlpox virus.</title>
        <authorList>
            <person name="Afonso C.L."/>
            <person name="Tulman E.R."/>
            <person name="Lu Z."/>
            <person name="Zsak L."/>
            <person name="Kutish G.F."/>
            <person name="Rock D.L."/>
        </authorList>
    </citation>
    <scope>NUCLEOTIDE SEQUENCE [LARGE SCALE GENOMIC DNA]</scope>
</reference>
<sequence length="1161" mass="133469">MDQKLGNKFLEPDPKQNVFYRPLHFQYVSYENFISYRLKEILSVNRTLLSFKNDTEKIVLRINNIKIIPPDYSPIIASIKGKSYDALVTFTVDIRKEVMTKDGLHVSTISSYEGNDSQLIKIPLLIGYGNKNPLDNSKFVSPNIIGGVFINKQSIEKVGINIVEKTTTWPKFKIVKPNAYTFSFSSISPVNILPTKYRHYKITMDLSQLENCYISSAKTFITVNVIVLIKFLINQDLNYIKNNLTYGMPLETIYLINAIIESSKTILEAEDFNINDYIESLIESEFQKQRSITSIDDFRYDLMYNFLPHMVNSSDQLKGFYLLGLLRKFIYCIYHTSRYPDRDSMVCHRVLTYGRYFEILANDELENYITNIKNDITNSHKNKGVCNVSIHVLTTPGFNHAFSGLLSGKFKKTDGSYRTHPHYSWMQNISIPRSVGYYPDQVKISKMFSVRKYHPSQYAFFCPSDVPERGPQVGLISQLSVLTSVSNIRTTEYIDLKNAIMKYIYTYDKNDISYFQTGHIITIENDLVAAINPELVDKFVDDFKFRKRVNYFDNLEIGISNVKDHMNEIRINIGSGRLIRPFLVVYKGELVMDTIGEELEKRIDTITFSDIQKEYPHVIEMLDLEQFVFSNVCESVSKFRELSDEDKKLYDYCDFPNEFRDGYVASTLVGINHNSGPRAILGCAQAKQAISCLSSDLRNKIDNGIHLLYPERPIVLSKATETSKIAINCFGQHVLVALMSYKGMNQEDGIVVKREFIERGGLDIVTAKKHQVEIPIENFKNRERINSTAYSKLDINGLVRLNAFLEPGDAIAKNISSRTLDDDFVADNQISFDISEKYTDMYMSRVERVQVDLTDKVKVRVLTMKERRPIMGDKFTSRTSQKGTIAYIASESELPYDKNGVTPDIIINSTSIYSRKTISMLIEMILTSAYSVKPYNNNGKNRPICFPSSNETDIEYYIEFARKCYQSAIPDLDKDELENEVYCESILYDPETDKPYKTKVFMGPLYYLRLRHLTQDKATVRCRGKKTKLIRQANEGRKRGGGIKFGEMERDCLIAHGAANTITEILKDSEEDYQDVYVCENCGDIATKKNNNVYCIRCTKLNLYTVLTKIDTTHVSKVFLTQMNARGIKINLTFNEQNPLFYKPMKQIDLSPTILKNHDLS</sequence>
<evidence type="ECO:0000250" key="1"/>
<evidence type="ECO:0000305" key="2"/>
<organism>
    <name type="scientific">Fowlpox virus (strain NVSL)</name>
    <name type="common">FPV</name>
    <dbReference type="NCBI Taxonomy" id="928301"/>
    <lineage>
        <taxon>Viruses</taxon>
        <taxon>Varidnaviria</taxon>
        <taxon>Bamfordvirae</taxon>
        <taxon>Nucleocytoviricota</taxon>
        <taxon>Pokkesviricetes</taxon>
        <taxon>Chitovirales</taxon>
        <taxon>Poxviridae</taxon>
        <taxon>Chordopoxvirinae</taxon>
        <taxon>Avipoxvirus</taxon>
        <taxon>Fowlpox virus</taxon>
    </lineage>
</organism>
<keyword id="KW-0240">DNA-directed RNA polymerase</keyword>
<keyword id="KW-0479">Metal-binding</keyword>
<keyword id="KW-0548">Nucleotidyltransferase</keyword>
<keyword id="KW-1185">Reference proteome</keyword>
<keyword id="KW-0804">Transcription</keyword>
<keyword id="KW-0808">Transferase</keyword>
<keyword id="KW-0946">Virion</keyword>
<dbReference type="EC" id="2.7.7.6"/>
<dbReference type="EMBL" id="AF198100">
    <property type="protein sequence ID" value="AAF44533.1"/>
    <property type="molecule type" value="Genomic_DNA"/>
</dbReference>
<dbReference type="RefSeq" id="NP_039152.1">
    <property type="nucleotide sequence ID" value="NC_002188.1"/>
</dbReference>
<dbReference type="SMR" id="Q9J544"/>
<dbReference type="GeneID" id="1486761"/>
<dbReference type="KEGG" id="vg:1486761"/>
<dbReference type="Proteomes" id="UP000008597">
    <property type="component" value="Segment"/>
</dbReference>
<dbReference type="GO" id="GO:0000428">
    <property type="term" value="C:DNA-directed RNA polymerase complex"/>
    <property type="evidence" value="ECO:0007669"/>
    <property type="project" value="UniProtKB-KW"/>
</dbReference>
<dbReference type="GO" id="GO:0044423">
    <property type="term" value="C:virion component"/>
    <property type="evidence" value="ECO:0007669"/>
    <property type="project" value="UniProtKB-KW"/>
</dbReference>
<dbReference type="GO" id="GO:0003677">
    <property type="term" value="F:DNA binding"/>
    <property type="evidence" value="ECO:0007669"/>
    <property type="project" value="InterPro"/>
</dbReference>
<dbReference type="GO" id="GO:0003899">
    <property type="term" value="F:DNA-directed RNA polymerase activity"/>
    <property type="evidence" value="ECO:0007669"/>
    <property type="project" value="UniProtKB-EC"/>
</dbReference>
<dbReference type="GO" id="GO:0046872">
    <property type="term" value="F:metal ion binding"/>
    <property type="evidence" value="ECO:0007669"/>
    <property type="project" value="UniProtKB-KW"/>
</dbReference>
<dbReference type="GO" id="GO:0032549">
    <property type="term" value="F:ribonucleoside binding"/>
    <property type="evidence" value="ECO:0007669"/>
    <property type="project" value="InterPro"/>
</dbReference>
<dbReference type="GO" id="GO:0006351">
    <property type="term" value="P:DNA-templated transcription"/>
    <property type="evidence" value="ECO:0007669"/>
    <property type="project" value="InterPro"/>
</dbReference>
<dbReference type="Gene3D" id="2.40.50.150">
    <property type="match status" value="1"/>
</dbReference>
<dbReference type="Gene3D" id="3.90.1100.10">
    <property type="match status" value="1"/>
</dbReference>
<dbReference type="Gene3D" id="2.40.270.10">
    <property type="entry name" value="DNA-directed RNA polymerase, subunit 2, domain 6"/>
    <property type="match status" value="1"/>
</dbReference>
<dbReference type="Gene3D" id="3.90.1800.10">
    <property type="entry name" value="RNA polymerase alpha subunit dimerisation domain"/>
    <property type="match status" value="1"/>
</dbReference>
<dbReference type="InterPro" id="IPR015712">
    <property type="entry name" value="DNA-dir_RNA_pol_su2"/>
</dbReference>
<dbReference type="InterPro" id="IPR007120">
    <property type="entry name" value="DNA-dir_RNAP_su2_dom"/>
</dbReference>
<dbReference type="InterPro" id="IPR037033">
    <property type="entry name" value="DNA-dir_RNAP_su2_hyb_sf"/>
</dbReference>
<dbReference type="InterPro" id="IPR024390">
    <property type="entry name" value="RNA_pol_132_poxvirus"/>
</dbReference>
<dbReference type="InterPro" id="IPR007121">
    <property type="entry name" value="RNA_pol_bsu_CS"/>
</dbReference>
<dbReference type="InterPro" id="IPR007645">
    <property type="entry name" value="RNA_pol_Rpb2_3"/>
</dbReference>
<dbReference type="InterPro" id="IPR007647">
    <property type="entry name" value="RNA_pol_Rpb2_5"/>
</dbReference>
<dbReference type="InterPro" id="IPR007641">
    <property type="entry name" value="RNA_pol_Rpb2_7"/>
</dbReference>
<dbReference type="InterPro" id="IPR014724">
    <property type="entry name" value="RNA_pol_RPB2_OB-fold"/>
</dbReference>
<dbReference type="PANTHER" id="PTHR20856">
    <property type="entry name" value="DNA-DIRECTED RNA POLYMERASE I SUBUNIT 2"/>
    <property type="match status" value="1"/>
</dbReference>
<dbReference type="Pfam" id="PF04565">
    <property type="entry name" value="RNA_pol_Rpb2_3"/>
    <property type="match status" value="1"/>
</dbReference>
<dbReference type="Pfam" id="PF04567">
    <property type="entry name" value="RNA_pol_Rpb2_5"/>
    <property type="match status" value="1"/>
</dbReference>
<dbReference type="Pfam" id="PF00562">
    <property type="entry name" value="RNA_pol_Rpb2_6"/>
    <property type="match status" value="1"/>
</dbReference>
<dbReference type="Pfam" id="PF04560">
    <property type="entry name" value="RNA_pol_Rpb2_7"/>
    <property type="match status" value="1"/>
</dbReference>
<dbReference type="Pfam" id="PF12415">
    <property type="entry name" value="rpo132"/>
    <property type="match status" value="1"/>
</dbReference>
<dbReference type="SUPFAM" id="SSF64484">
    <property type="entry name" value="beta and beta-prime subunits of DNA dependent RNA-polymerase"/>
    <property type="match status" value="1"/>
</dbReference>
<dbReference type="PROSITE" id="PS01166">
    <property type="entry name" value="RNA_POL_BETA"/>
    <property type="match status" value="1"/>
</dbReference>
<comment type="function">
    <text evidence="1">Part of the DNA-dependent RNA polymerase which catalyzes the transcription of viral DNA into RNA using the four ribonucleoside triphosphates as substrates. Responsible for the transcription of early, intermediate and late genes. DNA-dependent RNA polymerase associates with the early transcription factor (ETF), itself composed of D6 and A7, thereby allowing the early genes transcription. Late transcription, and probably also intermediate transcription, require newly synthesized RNA polymerase (By similarity).</text>
</comment>
<comment type="catalytic activity">
    <reaction>
        <text>RNA(n) + a ribonucleoside 5'-triphosphate = RNA(n+1) + diphosphate</text>
        <dbReference type="Rhea" id="RHEA:21248"/>
        <dbReference type="Rhea" id="RHEA-COMP:14527"/>
        <dbReference type="Rhea" id="RHEA-COMP:17342"/>
        <dbReference type="ChEBI" id="CHEBI:33019"/>
        <dbReference type="ChEBI" id="CHEBI:61557"/>
        <dbReference type="ChEBI" id="CHEBI:140395"/>
        <dbReference type="EC" id="2.7.7.6"/>
    </reaction>
</comment>
<comment type="subunit">
    <text evidence="1">The DNA-dependent RNA polymerase used for intermediate and late genes expression consists of eight subunits (147) kDa, (133) kDa, (35) kDa, (30) kDa, (22) kDa, (19) kDa, (18) kDa and (7) kDa totalling more than 500 kDa in mass. The same holoenzyme, with the addition of the transcription-specificity factor RAP94, is used for early gene expression (By similarity).</text>
</comment>
<comment type="subcellular location">
    <subcellularLocation>
        <location evidence="1">Virion</location>
    </subcellularLocation>
    <text evidence="1">All the enzymes and other proteins required to synthesize early mRNAs are packaged within the virion core along with the DNA genome. This is necessary because viral early mRNAs are synthesized within minutes after virus entry into the cell and are extruded through pores in the core particle (By similarity).</text>
</comment>
<comment type="similarity">
    <text evidence="2">Belongs to the RNA polymerase beta chain family.</text>
</comment>
<gene>
    <name type="primary">RPO132</name>
    <name type="ordered locus">FPV189</name>
</gene>
<accession>Q9J544</accession>
<proteinExistence type="inferred from homology"/>
<organismHost>
    <name type="scientific">Vertebrata</name>
    <dbReference type="NCBI Taxonomy" id="7742"/>
</organismHost>
<feature type="chain" id="PRO_0000048067" description="DNA-directed RNA polymerase 132 kDa polypeptide">
    <location>
        <begin position="1"/>
        <end position="1161"/>
    </location>
</feature>
<protein>
    <recommendedName>
        <fullName>DNA-directed RNA polymerase 132 kDa polypeptide</fullName>
        <ecNumber>2.7.7.6</ecNumber>
    </recommendedName>
</protein>